<protein>
    <recommendedName>
        <fullName evidence="1">Glutamate 5-kinase</fullName>
        <ecNumber evidence="1">2.7.2.11</ecNumber>
    </recommendedName>
    <alternativeName>
        <fullName evidence="1">Gamma-glutamyl kinase</fullName>
        <shortName evidence="1">GK</shortName>
    </alternativeName>
</protein>
<comment type="function">
    <text evidence="1">Catalyzes the transfer of a phosphate group to glutamate to form L-glutamate 5-phosphate.</text>
</comment>
<comment type="catalytic activity">
    <reaction evidence="1">
        <text>L-glutamate + ATP = L-glutamyl 5-phosphate + ADP</text>
        <dbReference type="Rhea" id="RHEA:14877"/>
        <dbReference type="ChEBI" id="CHEBI:29985"/>
        <dbReference type="ChEBI" id="CHEBI:30616"/>
        <dbReference type="ChEBI" id="CHEBI:58274"/>
        <dbReference type="ChEBI" id="CHEBI:456216"/>
        <dbReference type="EC" id="2.7.2.11"/>
    </reaction>
</comment>
<comment type="pathway">
    <text evidence="1">Amino-acid biosynthesis; L-proline biosynthesis; L-glutamate 5-semialdehyde from L-glutamate: step 1/2.</text>
</comment>
<comment type="subcellular location">
    <subcellularLocation>
        <location evidence="1">Cytoplasm</location>
    </subcellularLocation>
</comment>
<comment type="similarity">
    <text evidence="1">Belongs to the glutamate 5-kinase family.</text>
</comment>
<proteinExistence type="inferred from homology"/>
<dbReference type="EC" id="2.7.2.11" evidence="1"/>
<dbReference type="EMBL" id="CP000551">
    <property type="protein sequence ID" value="ABM70136.1"/>
    <property type="molecule type" value="Genomic_DNA"/>
</dbReference>
<dbReference type="RefSeq" id="WP_011818294.1">
    <property type="nucleotide sequence ID" value="NC_008816.1"/>
</dbReference>
<dbReference type="SMR" id="A2BQS5"/>
<dbReference type="STRING" id="146891.A9601_08521"/>
<dbReference type="KEGG" id="pmb:A9601_08521"/>
<dbReference type="eggNOG" id="COG0263">
    <property type="taxonomic scope" value="Bacteria"/>
</dbReference>
<dbReference type="HOGENOM" id="CLU_025400_2_0_3"/>
<dbReference type="OrthoDB" id="9804434at2"/>
<dbReference type="UniPathway" id="UPA00098">
    <property type="reaction ID" value="UER00359"/>
</dbReference>
<dbReference type="Proteomes" id="UP000002590">
    <property type="component" value="Chromosome"/>
</dbReference>
<dbReference type="GO" id="GO:0005829">
    <property type="term" value="C:cytosol"/>
    <property type="evidence" value="ECO:0007669"/>
    <property type="project" value="TreeGrafter"/>
</dbReference>
<dbReference type="GO" id="GO:0005524">
    <property type="term" value="F:ATP binding"/>
    <property type="evidence" value="ECO:0007669"/>
    <property type="project" value="UniProtKB-KW"/>
</dbReference>
<dbReference type="GO" id="GO:0004349">
    <property type="term" value="F:glutamate 5-kinase activity"/>
    <property type="evidence" value="ECO:0007669"/>
    <property type="project" value="UniProtKB-UniRule"/>
</dbReference>
<dbReference type="GO" id="GO:0003723">
    <property type="term" value="F:RNA binding"/>
    <property type="evidence" value="ECO:0007669"/>
    <property type="project" value="InterPro"/>
</dbReference>
<dbReference type="GO" id="GO:0055129">
    <property type="term" value="P:L-proline biosynthetic process"/>
    <property type="evidence" value="ECO:0007669"/>
    <property type="project" value="UniProtKB-UniRule"/>
</dbReference>
<dbReference type="CDD" id="cd04242">
    <property type="entry name" value="AAK_G5K_ProB"/>
    <property type="match status" value="1"/>
</dbReference>
<dbReference type="CDD" id="cd21157">
    <property type="entry name" value="PUA_G5K"/>
    <property type="match status" value="1"/>
</dbReference>
<dbReference type="FunFam" id="3.40.1160.10:FF:000018">
    <property type="entry name" value="Glutamate 5-kinase"/>
    <property type="match status" value="1"/>
</dbReference>
<dbReference type="Gene3D" id="3.40.1160.10">
    <property type="entry name" value="Acetylglutamate kinase-like"/>
    <property type="match status" value="1"/>
</dbReference>
<dbReference type="Gene3D" id="2.30.130.10">
    <property type="entry name" value="PUA domain"/>
    <property type="match status" value="1"/>
</dbReference>
<dbReference type="HAMAP" id="MF_00456">
    <property type="entry name" value="ProB"/>
    <property type="match status" value="1"/>
</dbReference>
<dbReference type="InterPro" id="IPR036393">
    <property type="entry name" value="AceGlu_kinase-like_sf"/>
</dbReference>
<dbReference type="InterPro" id="IPR001048">
    <property type="entry name" value="Asp/Glu/Uridylate_kinase"/>
</dbReference>
<dbReference type="InterPro" id="IPR041739">
    <property type="entry name" value="G5K_ProB"/>
</dbReference>
<dbReference type="InterPro" id="IPR001057">
    <property type="entry name" value="Glu/AcGlu_kinase"/>
</dbReference>
<dbReference type="InterPro" id="IPR011529">
    <property type="entry name" value="Glu_5kinase"/>
</dbReference>
<dbReference type="InterPro" id="IPR005715">
    <property type="entry name" value="Glu_5kinase/COase_Synthase"/>
</dbReference>
<dbReference type="InterPro" id="IPR019797">
    <property type="entry name" value="Glutamate_5-kinase_CS"/>
</dbReference>
<dbReference type="InterPro" id="IPR002478">
    <property type="entry name" value="PUA"/>
</dbReference>
<dbReference type="InterPro" id="IPR015947">
    <property type="entry name" value="PUA-like_sf"/>
</dbReference>
<dbReference type="InterPro" id="IPR036974">
    <property type="entry name" value="PUA_sf"/>
</dbReference>
<dbReference type="NCBIfam" id="TIGR01027">
    <property type="entry name" value="proB"/>
    <property type="match status" value="1"/>
</dbReference>
<dbReference type="PANTHER" id="PTHR43654">
    <property type="entry name" value="GLUTAMATE 5-KINASE"/>
    <property type="match status" value="1"/>
</dbReference>
<dbReference type="PANTHER" id="PTHR43654:SF3">
    <property type="entry name" value="GLUTAMATE 5-KINASE"/>
    <property type="match status" value="1"/>
</dbReference>
<dbReference type="Pfam" id="PF00696">
    <property type="entry name" value="AA_kinase"/>
    <property type="match status" value="1"/>
</dbReference>
<dbReference type="Pfam" id="PF01472">
    <property type="entry name" value="PUA"/>
    <property type="match status" value="1"/>
</dbReference>
<dbReference type="PIRSF" id="PIRSF000729">
    <property type="entry name" value="GK"/>
    <property type="match status" value="1"/>
</dbReference>
<dbReference type="PRINTS" id="PR00474">
    <property type="entry name" value="GLU5KINASE"/>
</dbReference>
<dbReference type="SMART" id="SM00359">
    <property type="entry name" value="PUA"/>
    <property type="match status" value="1"/>
</dbReference>
<dbReference type="SUPFAM" id="SSF53633">
    <property type="entry name" value="Carbamate kinase-like"/>
    <property type="match status" value="1"/>
</dbReference>
<dbReference type="SUPFAM" id="SSF88697">
    <property type="entry name" value="PUA domain-like"/>
    <property type="match status" value="1"/>
</dbReference>
<dbReference type="PROSITE" id="PS00902">
    <property type="entry name" value="GLUTAMATE_5_KINASE"/>
    <property type="match status" value="1"/>
</dbReference>
<dbReference type="PROSITE" id="PS50890">
    <property type="entry name" value="PUA"/>
    <property type="match status" value="1"/>
</dbReference>
<feature type="chain" id="PRO_1000081090" description="Glutamate 5-kinase">
    <location>
        <begin position="1"/>
        <end position="360"/>
    </location>
</feature>
<feature type="domain" description="PUA" evidence="1">
    <location>
        <begin position="275"/>
        <end position="356"/>
    </location>
</feature>
<feature type="binding site" evidence="1">
    <location>
        <position position="7"/>
    </location>
    <ligand>
        <name>ATP</name>
        <dbReference type="ChEBI" id="CHEBI:30616"/>
    </ligand>
</feature>
<feature type="binding site" evidence="1">
    <location>
        <position position="47"/>
    </location>
    <ligand>
        <name>substrate</name>
    </ligand>
</feature>
<feature type="binding site" evidence="1">
    <location>
        <position position="134"/>
    </location>
    <ligand>
        <name>substrate</name>
    </ligand>
</feature>
<feature type="binding site" evidence="1">
    <location>
        <position position="146"/>
    </location>
    <ligand>
        <name>substrate</name>
    </ligand>
</feature>
<feature type="binding site" evidence="1">
    <location>
        <begin position="166"/>
        <end position="167"/>
    </location>
    <ligand>
        <name>ATP</name>
        <dbReference type="ChEBI" id="CHEBI:30616"/>
    </ligand>
</feature>
<feature type="binding site" evidence="1">
    <location>
        <begin position="210"/>
        <end position="216"/>
    </location>
    <ligand>
        <name>ATP</name>
        <dbReference type="ChEBI" id="CHEBI:30616"/>
    </ligand>
</feature>
<evidence type="ECO:0000255" key="1">
    <source>
        <dbReference type="HAMAP-Rule" id="MF_00456"/>
    </source>
</evidence>
<name>PROB_PROMS</name>
<reference key="1">
    <citation type="journal article" date="2007" name="PLoS Genet.">
        <title>Patterns and implications of gene gain and loss in the evolution of Prochlorococcus.</title>
        <authorList>
            <person name="Kettler G.C."/>
            <person name="Martiny A.C."/>
            <person name="Huang K."/>
            <person name="Zucker J."/>
            <person name="Coleman M.L."/>
            <person name="Rodrigue S."/>
            <person name="Chen F."/>
            <person name="Lapidus A."/>
            <person name="Ferriera S."/>
            <person name="Johnson J."/>
            <person name="Steglich C."/>
            <person name="Church G.M."/>
            <person name="Richardson P."/>
            <person name="Chisholm S.W."/>
        </authorList>
    </citation>
    <scope>NUCLEOTIDE SEQUENCE [LARGE SCALE GENOMIC DNA]</scope>
    <source>
        <strain>AS9601</strain>
    </source>
</reference>
<organism>
    <name type="scientific">Prochlorococcus marinus (strain AS9601)</name>
    <dbReference type="NCBI Taxonomy" id="146891"/>
    <lineage>
        <taxon>Bacteria</taxon>
        <taxon>Bacillati</taxon>
        <taxon>Cyanobacteriota</taxon>
        <taxon>Cyanophyceae</taxon>
        <taxon>Synechococcales</taxon>
        <taxon>Prochlorococcaceae</taxon>
        <taxon>Prochlorococcus</taxon>
    </lineage>
</organism>
<sequence>MKTWVIKIGTSILRGTEETSTEEVIENLSRSFTSFLSKGNKLILVTSGAVGLGCQKLNIKTRPNDLSTLQATAAVGQVNLMSLYDKVFNRLGLNIAQILITKADFNSRESFNNASKTLKRLIDLNVIPIVNENDTVANEELKYGDNDTLSALVALAINANKLILLTDIENLYSKDPRNNKDAQPIKEVHNSELKEIKDKNIQNSNNEWGTGGISTKLISAEIATKGGVEVQLVDGTNKKNLIEIFNDNKIGTLFYPVEKPIGNKKSWLSHAIQTVGKITLDDGASFAIKKKGASLLAVGVKNVEGNFTINQAVKIVNTNDKEVAKGLVSISSDKLRSILNNKENNNSSIIVVHRDVLALS</sequence>
<accession>A2BQS5</accession>
<keyword id="KW-0028">Amino-acid biosynthesis</keyword>
<keyword id="KW-0067">ATP-binding</keyword>
<keyword id="KW-0963">Cytoplasm</keyword>
<keyword id="KW-0418">Kinase</keyword>
<keyword id="KW-0547">Nucleotide-binding</keyword>
<keyword id="KW-0641">Proline biosynthesis</keyword>
<keyword id="KW-0808">Transferase</keyword>
<gene>
    <name evidence="1" type="primary">proB</name>
    <name type="ordered locus">A9601_08521</name>
</gene>